<organism>
    <name type="scientific">Paracidovorax citrulli (strain AAC00-1)</name>
    <name type="common">Acidovorax citrulli</name>
    <dbReference type="NCBI Taxonomy" id="397945"/>
    <lineage>
        <taxon>Bacteria</taxon>
        <taxon>Pseudomonadati</taxon>
        <taxon>Pseudomonadota</taxon>
        <taxon>Betaproteobacteria</taxon>
        <taxon>Burkholderiales</taxon>
        <taxon>Comamonadaceae</taxon>
        <taxon>Paracidovorax</taxon>
    </lineage>
</organism>
<comment type="function">
    <text evidence="1">Catalyzes the formation of 5-methyl-uridine at position 1939 (m5U1939) in 23S rRNA.</text>
</comment>
<comment type="catalytic activity">
    <reaction evidence="1">
        <text>uridine(1939) in 23S rRNA + S-adenosyl-L-methionine = 5-methyluridine(1939) in 23S rRNA + S-adenosyl-L-homocysteine + H(+)</text>
        <dbReference type="Rhea" id="RHEA:42908"/>
        <dbReference type="Rhea" id="RHEA-COMP:10278"/>
        <dbReference type="Rhea" id="RHEA-COMP:10279"/>
        <dbReference type="ChEBI" id="CHEBI:15378"/>
        <dbReference type="ChEBI" id="CHEBI:57856"/>
        <dbReference type="ChEBI" id="CHEBI:59789"/>
        <dbReference type="ChEBI" id="CHEBI:65315"/>
        <dbReference type="ChEBI" id="CHEBI:74447"/>
        <dbReference type="EC" id="2.1.1.190"/>
    </reaction>
</comment>
<comment type="similarity">
    <text evidence="1">Belongs to the class I-like SAM-binding methyltransferase superfamily. RNA M5U methyltransferase family. RlmD subfamily.</text>
</comment>
<proteinExistence type="inferred from homology"/>
<name>RLMD_PARC0</name>
<feature type="chain" id="PRO_0000282024" description="23S rRNA (uracil(1939)-C(5))-methyltransferase RlmD">
    <location>
        <begin position="1"/>
        <end position="491"/>
    </location>
</feature>
<feature type="domain" description="TRAM" evidence="1">
    <location>
        <begin position="18"/>
        <end position="81"/>
    </location>
</feature>
<feature type="region of interest" description="Disordered" evidence="2">
    <location>
        <begin position="1"/>
        <end position="28"/>
    </location>
</feature>
<feature type="compositionally biased region" description="Basic and acidic residues" evidence="2">
    <location>
        <begin position="1"/>
        <end position="10"/>
    </location>
</feature>
<feature type="active site" description="Nucleophile" evidence="1">
    <location>
        <position position="447"/>
    </location>
</feature>
<feature type="binding site" evidence="1">
    <location>
        <position position="94"/>
    </location>
    <ligand>
        <name>[4Fe-4S] cluster</name>
        <dbReference type="ChEBI" id="CHEBI:49883"/>
    </ligand>
</feature>
<feature type="binding site" evidence="1">
    <location>
        <position position="104"/>
    </location>
    <ligand>
        <name>[4Fe-4S] cluster</name>
        <dbReference type="ChEBI" id="CHEBI:49883"/>
    </ligand>
</feature>
<feature type="binding site" evidence="1">
    <location>
        <position position="107"/>
    </location>
    <ligand>
        <name>[4Fe-4S] cluster</name>
        <dbReference type="ChEBI" id="CHEBI:49883"/>
    </ligand>
</feature>
<feature type="binding site" evidence="1">
    <location>
        <position position="186"/>
    </location>
    <ligand>
        <name>[4Fe-4S] cluster</name>
        <dbReference type="ChEBI" id="CHEBI:49883"/>
    </ligand>
</feature>
<feature type="binding site" evidence="1">
    <location>
        <position position="294"/>
    </location>
    <ligand>
        <name>S-adenosyl-L-methionine</name>
        <dbReference type="ChEBI" id="CHEBI:59789"/>
    </ligand>
</feature>
<feature type="binding site" evidence="1">
    <location>
        <position position="323"/>
    </location>
    <ligand>
        <name>S-adenosyl-L-methionine</name>
        <dbReference type="ChEBI" id="CHEBI:59789"/>
    </ligand>
</feature>
<feature type="binding site" evidence="1">
    <location>
        <position position="328"/>
    </location>
    <ligand>
        <name>S-adenosyl-L-methionine</name>
        <dbReference type="ChEBI" id="CHEBI:59789"/>
    </ligand>
</feature>
<feature type="binding site" evidence="1">
    <location>
        <position position="344"/>
    </location>
    <ligand>
        <name>S-adenosyl-L-methionine</name>
        <dbReference type="ChEBI" id="CHEBI:59789"/>
    </ligand>
</feature>
<feature type="binding site" evidence="1">
    <location>
        <position position="379"/>
    </location>
    <ligand>
        <name>S-adenosyl-L-methionine</name>
        <dbReference type="ChEBI" id="CHEBI:59789"/>
    </ligand>
</feature>
<feature type="binding site" evidence="1">
    <location>
        <position position="400"/>
    </location>
    <ligand>
        <name>S-adenosyl-L-methionine</name>
        <dbReference type="ChEBI" id="CHEBI:59789"/>
    </ligand>
</feature>
<reference key="1">
    <citation type="submission" date="2006-12" db="EMBL/GenBank/DDBJ databases">
        <title>Complete sequence of Acidovorax avenae subsp. citrulli AAC00-1.</title>
        <authorList>
            <person name="Copeland A."/>
            <person name="Lucas S."/>
            <person name="Lapidus A."/>
            <person name="Barry K."/>
            <person name="Detter J.C."/>
            <person name="Glavina del Rio T."/>
            <person name="Dalin E."/>
            <person name="Tice H."/>
            <person name="Pitluck S."/>
            <person name="Kiss H."/>
            <person name="Brettin T."/>
            <person name="Bruce D."/>
            <person name="Han C."/>
            <person name="Tapia R."/>
            <person name="Gilna P."/>
            <person name="Schmutz J."/>
            <person name="Larimer F."/>
            <person name="Land M."/>
            <person name="Hauser L."/>
            <person name="Kyrpides N."/>
            <person name="Kim E."/>
            <person name="Stahl D."/>
            <person name="Richardson P."/>
        </authorList>
    </citation>
    <scope>NUCLEOTIDE SEQUENCE [LARGE SCALE GENOMIC DNA]</scope>
    <source>
        <strain>AAC00-1</strain>
    </source>
</reference>
<evidence type="ECO:0000255" key="1">
    <source>
        <dbReference type="HAMAP-Rule" id="MF_01010"/>
    </source>
</evidence>
<evidence type="ECO:0000256" key="2">
    <source>
        <dbReference type="SAM" id="MobiDB-lite"/>
    </source>
</evidence>
<dbReference type="EC" id="2.1.1.190" evidence="1"/>
<dbReference type="EMBL" id="CP000512">
    <property type="protein sequence ID" value="ABM33878.1"/>
    <property type="molecule type" value="Genomic_DNA"/>
</dbReference>
<dbReference type="RefSeq" id="WP_011796383.1">
    <property type="nucleotide sequence ID" value="NC_008752.1"/>
</dbReference>
<dbReference type="SMR" id="A1TSE0"/>
<dbReference type="STRING" id="397945.Aave_3318"/>
<dbReference type="GeneID" id="79793007"/>
<dbReference type="KEGG" id="aav:Aave_3318"/>
<dbReference type="eggNOG" id="COG2265">
    <property type="taxonomic scope" value="Bacteria"/>
</dbReference>
<dbReference type="HOGENOM" id="CLU_014689_8_2_4"/>
<dbReference type="Proteomes" id="UP000002596">
    <property type="component" value="Chromosome"/>
</dbReference>
<dbReference type="GO" id="GO:0051539">
    <property type="term" value="F:4 iron, 4 sulfur cluster binding"/>
    <property type="evidence" value="ECO:0007669"/>
    <property type="project" value="UniProtKB-KW"/>
</dbReference>
<dbReference type="GO" id="GO:0005506">
    <property type="term" value="F:iron ion binding"/>
    <property type="evidence" value="ECO:0007669"/>
    <property type="project" value="UniProtKB-UniRule"/>
</dbReference>
<dbReference type="GO" id="GO:0003723">
    <property type="term" value="F:RNA binding"/>
    <property type="evidence" value="ECO:0007669"/>
    <property type="project" value="InterPro"/>
</dbReference>
<dbReference type="GO" id="GO:0070041">
    <property type="term" value="F:rRNA (uridine-C5-)-methyltransferase activity"/>
    <property type="evidence" value="ECO:0007669"/>
    <property type="project" value="UniProtKB-UniRule"/>
</dbReference>
<dbReference type="GO" id="GO:0070475">
    <property type="term" value="P:rRNA base methylation"/>
    <property type="evidence" value="ECO:0007669"/>
    <property type="project" value="TreeGrafter"/>
</dbReference>
<dbReference type="CDD" id="cd02440">
    <property type="entry name" value="AdoMet_MTases"/>
    <property type="match status" value="1"/>
</dbReference>
<dbReference type="Gene3D" id="2.40.50.1070">
    <property type="match status" value="1"/>
</dbReference>
<dbReference type="Gene3D" id="2.40.50.140">
    <property type="entry name" value="Nucleic acid-binding proteins"/>
    <property type="match status" value="1"/>
</dbReference>
<dbReference type="Gene3D" id="3.40.50.150">
    <property type="entry name" value="Vaccinia Virus protein VP39"/>
    <property type="match status" value="1"/>
</dbReference>
<dbReference type="HAMAP" id="MF_01010">
    <property type="entry name" value="23SrRNA_methyltr_RlmD"/>
    <property type="match status" value="1"/>
</dbReference>
<dbReference type="InterPro" id="IPR001566">
    <property type="entry name" value="23S_rRNA_MeTrfase_RlmD"/>
</dbReference>
<dbReference type="InterPro" id="IPR030391">
    <property type="entry name" value="MeTrfase_TrmA_CS"/>
</dbReference>
<dbReference type="InterPro" id="IPR012340">
    <property type="entry name" value="NA-bd_OB-fold"/>
</dbReference>
<dbReference type="InterPro" id="IPR029063">
    <property type="entry name" value="SAM-dependent_MTases_sf"/>
</dbReference>
<dbReference type="InterPro" id="IPR010280">
    <property type="entry name" value="U5_MeTrfase_fam"/>
</dbReference>
<dbReference type="NCBIfam" id="NF009639">
    <property type="entry name" value="PRK13168.1"/>
    <property type="match status" value="1"/>
</dbReference>
<dbReference type="NCBIfam" id="TIGR00479">
    <property type="entry name" value="rumA"/>
    <property type="match status" value="1"/>
</dbReference>
<dbReference type="PANTHER" id="PTHR11061">
    <property type="entry name" value="RNA M5U METHYLTRANSFERASE"/>
    <property type="match status" value="1"/>
</dbReference>
<dbReference type="PANTHER" id="PTHR11061:SF30">
    <property type="entry name" value="TRNA (URACIL(54)-C(5))-METHYLTRANSFERASE"/>
    <property type="match status" value="1"/>
</dbReference>
<dbReference type="Pfam" id="PF05958">
    <property type="entry name" value="tRNA_U5-meth_tr"/>
    <property type="match status" value="1"/>
</dbReference>
<dbReference type="SUPFAM" id="SSF50249">
    <property type="entry name" value="Nucleic acid-binding proteins"/>
    <property type="match status" value="1"/>
</dbReference>
<dbReference type="SUPFAM" id="SSF53335">
    <property type="entry name" value="S-adenosyl-L-methionine-dependent methyltransferases"/>
    <property type="match status" value="1"/>
</dbReference>
<dbReference type="PROSITE" id="PS51687">
    <property type="entry name" value="SAM_MT_RNA_M5U"/>
    <property type="match status" value="1"/>
</dbReference>
<dbReference type="PROSITE" id="PS01231">
    <property type="entry name" value="TRMA_2"/>
    <property type="match status" value="1"/>
</dbReference>
<accession>A1TSE0</accession>
<sequence length="491" mass="53960">MSDPTEHPEILQDPSSSAPVQGRTDLPPGWLEVTSMDMDAQGVARRPDGKVVFIDGALPFEWVSASTHRKKNNWEQASLTAIHRESPQRVRPGCPHFGLHAGACGGCKMQHLHVGAQVAVKQRVLEDNLWHLGKVKAETVLRPIEGPAWGYRYRARLAVRHVEKKGKVLVGFHERKSRYIADMEVCPVLPPHVSAMLLPLRALIASMDARDTCPQIELACGDDVTALVLRHLEPLSEADLGRLRSFAAAHGVQWWLQPKGPDTVHLLDEGGPQLNYALPDFGITMPFKPTDFTQVNPHINRVLVTRALRLLDAGRTDRVIDWFCGLGNFTLPIATQAREVVGIEGSEALVARSRENYRKNQDDRPQGQALAPATFVARNLFEMTPEMLIADGVADKWLVDPPREGAFALAKALADIHQARIGAEDAPALPASAEGWTPPQRIVYVSCNPATLARDAGLLVHQAGYRCVAAGVVNMFPHTAHVESMAVFERV</sequence>
<keyword id="KW-0004">4Fe-4S</keyword>
<keyword id="KW-0408">Iron</keyword>
<keyword id="KW-0411">Iron-sulfur</keyword>
<keyword id="KW-0479">Metal-binding</keyword>
<keyword id="KW-0489">Methyltransferase</keyword>
<keyword id="KW-0698">rRNA processing</keyword>
<keyword id="KW-0949">S-adenosyl-L-methionine</keyword>
<keyword id="KW-0808">Transferase</keyword>
<protein>
    <recommendedName>
        <fullName evidence="1">23S rRNA (uracil(1939)-C(5))-methyltransferase RlmD</fullName>
        <ecNumber evidence="1">2.1.1.190</ecNumber>
    </recommendedName>
    <alternativeName>
        <fullName evidence="1">23S rRNA(m5U1939)-methyltransferase</fullName>
    </alternativeName>
</protein>
<gene>
    <name evidence="1" type="primary">rlmD</name>
    <name type="synonym">rumA</name>
    <name type="ordered locus">Aave_3318</name>
</gene>